<comment type="function">
    <text evidence="3">Part of the elfADCG-ycbUVF fimbrial operon, which promotes adhesion of bacteria to different abiotic surfaces. Could be required for the biogenesis of the ElfA fimbriae.</text>
</comment>
<comment type="subcellular location">
    <subcellularLocation>
        <location evidence="1">Periplasm</location>
    </subcellularLocation>
</comment>
<comment type="induction">
    <text evidence="3">Expression is negatively regulated by H-NS and subjected to cAMP receptor protein (CRP)-mediated catabolite repression.</text>
</comment>
<comment type="miscellaneous">
    <text evidence="5">The operon is cryptic under classical laboratory conditions, but is functional when constitutively expressed.</text>
</comment>
<comment type="similarity">
    <text evidence="4">Belongs to the periplasmic pilus chaperone family.</text>
</comment>
<feature type="signal peptide" evidence="2">
    <location>
        <begin position="1"/>
        <end position="26"/>
    </location>
</feature>
<feature type="chain" id="PRO_0000009292" description="Probable fimbrial chaperone protein ElfD">
    <location>
        <begin position="27"/>
        <end position="233"/>
    </location>
</feature>
<name>ELFD_ECOLI</name>
<gene>
    <name type="primary">elfD</name>
    <name type="synonym">ycbR</name>
    <name type="ordered locus">b0939</name>
    <name type="ordered locus">JW0922</name>
</gene>
<evidence type="ECO:0000250" key="1"/>
<evidence type="ECO:0000255" key="2"/>
<evidence type="ECO:0000269" key="3">
    <source>
    </source>
</evidence>
<evidence type="ECO:0000305" key="4"/>
<evidence type="ECO:0000305" key="5">
    <source>
    </source>
</evidence>
<protein>
    <recommendedName>
        <fullName>Probable fimbrial chaperone protein ElfD</fullName>
    </recommendedName>
</protein>
<proteinExistence type="evidence at transcript level"/>
<sequence>MKTCITKGIVTVSLTAILLSCSSAWAAGKGGIGLAATRLVYSEGEEQISLGVRNTSPDVPYLIQSWVMTPDNKKSADFIITPPLFVLNPANENLLRIMYIGAPLAKDRETLFFTSVRAVPSTTKRKEGNTLKIATQSVIKLFWRPKGLAYPLGEAPAKLRCTSSADMVTVSNPTPYFITLTDLKIGGKVVKNQMISPFDKYQFSLPKGAKNSSVTYRTINDYGAETPQLNCKS</sequence>
<organism>
    <name type="scientific">Escherichia coli (strain K12)</name>
    <dbReference type="NCBI Taxonomy" id="83333"/>
    <lineage>
        <taxon>Bacteria</taxon>
        <taxon>Pseudomonadati</taxon>
        <taxon>Pseudomonadota</taxon>
        <taxon>Gammaproteobacteria</taxon>
        <taxon>Enterobacterales</taxon>
        <taxon>Enterobacteriaceae</taxon>
        <taxon>Escherichia</taxon>
    </lineage>
</organism>
<dbReference type="EMBL" id="U00096">
    <property type="protein sequence ID" value="AAC74025.1"/>
    <property type="molecule type" value="Genomic_DNA"/>
</dbReference>
<dbReference type="EMBL" id="AP009048">
    <property type="protein sequence ID" value="BAA35694.1"/>
    <property type="molecule type" value="Genomic_DNA"/>
</dbReference>
<dbReference type="PIR" id="B64834">
    <property type="entry name" value="B64834"/>
</dbReference>
<dbReference type="RefSeq" id="NP_415459.1">
    <property type="nucleotide sequence ID" value="NC_000913.3"/>
</dbReference>
<dbReference type="RefSeq" id="WP_001295349.1">
    <property type="nucleotide sequence ID" value="NZ_SSZK01000002.1"/>
</dbReference>
<dbReference type="SMR" id="P75856"/>
<dbReference type="BioGRID" id="4262112">
    <property type="interactions" value="122"/>
</dbReference>
<dbReference type="BioGRID" id="851114">
    <property type="interactions" value="1"/>
</dbReference>
<dbReference type="FunCoup" id="P75856">
    <property type="interactions" value="56"/>
</dbReference>
<dbReference type="IntAct" id="P75856">
    <property type="interactions" value="3"/>
</dbReference>
<dbReference type="STRING" id="511145.b0939"/>
<dbReference type="PaxDb" id="511145-b0939"/>
<dbReference type="EnsemblBacteria" id="AAC74025">
    <property type="protein sequence ID" value="AAC74025"/>
    <property type="gene ID" value="b0939"/>
</dbReference>
<dbReference type="GeneID" id="946773"/>
<dbReference type="KEGG" id="ecj:JW0922"/>
<dbReference type="KEGG" id="eco:b0939"/>
<dbReference type="PATRIC" id="fig|1411691.4.peg.1335"/>
<dbReference type="EchoBASE" id="EB3474"/>
<dbReference type="eggNOG" id="COG3121">
    <property type="taxonomic scope" value="Bacteria"/>
</dbReference>
<dbReference type="HOGENOM" id="CLU_070768_2_1_6"/>
<dbReference type="InParanoid" id="P75856"/>
<dbReference type="OMA" id="FTWAAGK"/>
<dbReference type="OrthoDB" id="9131059at2"/>
<dbReference type="PhylomeDB" id="P75856"/>
<dbReference type="BioCyc" id="EcoCyc:G6481-MONOMER"/>
<dbReference type="PRO" id="PR:P75856"/>
<dbReference type="Proteomes" id="UP000000625">
    <property type="component" value="Chromosome"/>
</dbReference>
<dbReference type="GO" id="GO:0030288">
    <property type="term" value="C:outer membrane-bounded periplasmic space"/>
    <property type="evidence" value="ECO:0000318"/>
    <property type="project" value="GO_Central"/>
</dbReference>
<dbReference type="GO" id="GO:0044183">
    <property type="term" value="F:protein folding chaperone"/>
    <property type="evidence" value="ECO:0000318"/>
    <property type="project" value="GO_Central"/>
</dbReference>
<dbReference type="GO" id="GO:0071555">
    <property type="term" value="P:cell wall organization"/>
    <property type="evidence" value="ECO:0007669"/>
    <property type="project" value="InterPro"/>
</dbReference>
<dbReference type="GO" id="GO:0061077">
    <property type="term" value="P:chaperone-mediated protein folding"/>
    <property type="evidence" value="ECO:0000318"/>
    <property type="project" value="GO_Central"/>
</dbReference>
<dbReference type="FunFam" id="2.60.40.10:FF:000458">
    <property type="entry name" value="Molecular chaperone FimC"/>
    <property type="match status" value="1"/>
</dbReference>
<dbReference type="Gene3D" id="2.60.40.10">
    <property type="entry name" value="Immunoglobulins"/>
    <property type="match status" value="2"/>
</dbReference>
<dbReference type="InterPro" id="IPR013783">
    <property type="entry name" value="Ig-like_fold"/>
</dbReference>
<dbReference type="InterPro" id="IPR008962">
    <property type="entry name" value="PapD-like_sf"/>
</dbReference>
<dbReference type="InterPro" id="IPR050643">
    <property type="entry name" value="Periplasmic_pilus_chap"/>
</dbReference>
<dbReference type="InterPro" id="IPR036316">
    <property type="entry name" value="Pili_assmbl_chap_C_dom_sf"/>
</dbReference>
<dbReference type="InterPro" id="IPR001829">
    <property type="entry name" value="Pili_assmbl_chaperone_bac"/>
</dbReference>
<dbReference type="InterPro" id="IPR016148">
    <property type="entry name" value="Pili_assmbl_chaperone_C"/>
</dbReference>
<dbReference type="InterPro" id="IPR018046">
    <property type="entry name" value="Pili_assmbl_chaperone_CS"/>
</dbReference>
<dbReference type="InterPro" id="IPR016147">
    <property type="entry name" value="Pili_assmbl_chaperone_N"/>
</dbReference>
<dbReference type="PANTHER" id="PTHR30251:SF0">
    <property type="entry name" value="FIMBRIAL CHAPERONE PROTEIN ELFD-RELATED"/>
    <property type="match status" value="1"/>
</dbReference>
<dbReference type="PANTHER" id="PTHR30251">
    <property type="entry name" value="PILUS ASSEMBLY CHAPERONE"/>
    <property type="match status" value="1"/>
</dbReference>
<dbReference type="Pfam" id="PF02753">
    <property type="entry name" value="PapD_C"/>
    <property type="match status" value="1"/>
</dbReference>
<dbReference type="Pfam" id="PF00345">
    <property type="entry name" value="PapD_N"/>
    <property type="match status" value="1"/>
</dbReference>
<dbReference type="PRINTS" id="PR00969">
    <property type="entry name" value="CHAPERONPILI"/>
</dbReference>
<dbReference type="SUPFAM" id="SSF49354">
    <property type="entry name" value="PapD-like"/>
    <property type="match status" value="1"/>
</dbReference>
<dbReference type="SUPFAM" id="SSF49584">
    <property type="entry name" value="Periplasmic chaperone C-domain"/>
    <property type="match status" value="1"/>
</dbReference>
<dbReference type="PROSITE" id="PS00635">
    <property type="entry name" value="PILI_CHAPERONE"/>
    <property type="match status" value="1"/>
</dbReference>
<keyword id="KW-0143">Chaperone</keyword>
<keyword id="KW-1029">Fimbrium biogenesis</keyword>
<keyword id="KW-0393">Immunoglobulin domain</keyword>
<keyword id="KW-0574">Periplasm</keyword>
<keyword id="KW-1185">Reference proteome</keyword>
<keyword id="KW-0732">Signal</keyword>
<reference key="1">
    <citation type="journal article" date="1996" name="DNA Res.">
        <title>A 718-kb DNA sequence of the Escherichia coli K-12 genome corresponding to the 12.7-28.0 min region on the linkage map.</title>
        <authorList>
            <person name="Oshima T."/>
            <person name="Aiba H."/>
            <person name="Baba T."/>
            <person name="Fujita K."/>
            <person name="Hayashi K."/>
            <person name="Honjo A."/>
            <person name="Ikemoto K."/>
            <person name="Inada T."/>
            <person name="Itoh T."/>
            <person name="Kajihara M."/>
            <person name="Kanai K."/>
            <person name="Kashimoto K."/>
            <person name="Kimura S."/>
            <person name="Kitagawa M."/>
            <person name="Makino K."/>
            <person name="Masuda S."/>
            <person name="Miki T."/>
            <person name="Mizobuchi K."/>
            <person name="Mori H."/>
            <person name="Motomura K."/>
            <person name="Nakamura Y."/>
            <person name="Nashimoto H."/>
            <person name="Nishio Y."/>
            <person name="Saito N."/>
            <person name="Sampei G."/>
            <person name="Seki Y."/>
            <person name="Tagami H."/>
            <person name="Takemoto K."/>
            <person name="Wada C."/>
            <person name="Yamamoto Y."/>
            <person name="Yano M."/>
            <person name="Horiuchi T."/>
        </authorList>
    </citation>
    <scope>NUCLEOTIDE SEQUENCE [LARGE SCALE GENOMIC DNA]</scope>
    <source>
        <strain>K12 / W3110 / ATCC 27325 / DSM 5911</strain>
    </source>
</reference>
<reference key="2">
    <citation type="journal article" date="1997" name="Science">
        <title>The complete genome sequence of Escherichia coli K-12.</title>
        <authorList>
            <person name="Blattner F.R."/>
            <person name="Plunkett G. III"/>
            <person name="Bloch C.A."/>
            <person name="Perna N.T."/>
            <person name="Burland V."/>
            <person name="Riley M."/>
            <person name="Collado-Vides J."/>
            <person name="Glasner J.D."/>
            <person name="Rode C.K."/>
            <person name="Mayhew G.F."/>
            <person name="Gregor J."/>
            <person name="Davis N.W."/>
            <person name="Kirkpatrick H.A."/>
            <person name="Goeden M.A."/>
            <person name="Rose D.J."/>
            <person name="Mau B."/>
            <person name="Shao Y."/>
        </authorList>
    </citation>
    <scope>NUCLEOTIDE SEQUENCE [LARGE SCALE GENOMIC DNA]</scope>
    <source>
        <strain>K12 / MG1655 / ATCC 47076</strain>
    </source>
</reference>
<reference key="3">
    <citation type="journal article" date="2006" name="Mol. Syst. Biol.">
        <title>Highly accurate genome sequences of Escherichia coli K-12 strains MG1655 and W3110.</title>
        <authorList>
            <person name="Hayashi K."/>
            <person name="Morooka N."/>
            <person name="Yamamoto Y."/>
            <person name="Fujita K."/>
            <person name="Isono K."/>
            <person name="Choi S."/>
            <person name="Ohtsubo E."/>
            <person name="Baba T."/>
            <person name="Wanner B.L."/>
            <person name="Mori H."/>
            <person name="Horiuchi T."/>
        </authorList>
    </citation>
    <scope>NUCLEOTIDE SEQUENCE [LARGE SCALE GENOMIC DNA]</scope>
    <source>
        <strain>K12 / W3110 / ATCC 27325 / DSM 5911</strain>
    </source>
</reference>
<reference key="4">
    <citation type="journal article" date="2010" name="Environ. Microbiol.">
        <title>Escherichia coli K-12 possesses multiple cryptic but functional chaperone-usher fimbriae with distinct surface specificities.</title>
        <authorList>
            <person name="Korea C.G."/>
            <person name="Badouraly R."/>
            <person name="Prevost M.C."/>
            <person name="Ghigo J.M."/>
            <person name="Beloin C."/>
        </authorList>
    </citation>
    <scope>FUNCTION</scope>
    <scope>INDUCTION</scope>
    <source>
        <strain>K12 / MG1655 / ATCC 47076</strain>
    </source>
</reference>
<accession>P75856</accession>